<organism>
    <name type="scientific">Helicobacter hepaticus (strain ATCC 51449 / 3B1)</name>
    <dbReference type="NCBI Taxonomy" id="235279"/>
    <lineage>
        <taxon>Bacteria</taxon>
        <taxon>Pseudomonadati</taxon>
        <taxon>Campylobacterota</taxon>
        <taxon>Epsilonproteobacteria</taxon>
        <taxon>Campylobacterales</taxon>
        <taxon>Helicobacteraceae</taxon>
        <taxon>Helicobacter</taxon>
    </lineage>
</organism>
<accession>Q7VFZ4</accession>
<keyword id="KW-0119">Carbohydrate metabolism</keyword>
<keyword id="KW-0963">Cytoplasm</keyword>
<keyword id="KW-0413">Isomerase</keyword>
<keyword id="KW-0479">Metal-binding</keyword>
<keyword id="KW-1185">Reference proteome</keyword>
<keyword id="KW-0862">Zinc</keyword>
<name>GMHA_HELHP</name>
<protein>
    <recommendedName>
        <fullName evidence="1">Phosphoheptose isomerase</fullName>
        <ecNumber evidence="1">5.3.1.28</ecNumber>
    </recommendedName>
    <alternativeName>
        <fullName evidence="1">Sedoheptulose 7-phosphate isomerase</fullName>
    </alternativeName>
</protein>
<evidence type="ECO:0000255" key="1">
    <source>
        <dbReference type="HAMAP-Rule" id="MF_00067"/>
    </source>
</evidence>
<proteinExistence type="inferred from homology"/>
<feature type="chain" id="PRO_1000009072" description="Phosphoheptose isomerase">
    <location>
        <begin position="1"/>
        <end position="196"/>
    </location>
</feature>
<feature type="domain" description="SIS" evidence="1">
    <location>
        <begin position="33"/>
        <end position="192"/>
    </location>
</feature>
<feature type="binding site" evidence="1">
    <location>
        <begin position="48"/>
        <end position="50"/>
    </location>
    <ligand>
        <name>substrate</name>
    </ligand>
</feature>
<feature type="binding site" evidence="1">
    <location>
        <position position="57"/>
    </location>
    <ligand>
        <name>Zn(2+)</name>
        <dbReference type="ChEBI" id="CHEBI:29105"/>
    </ligand>
</feature>
<feature type="binding site" evidence="1">
    <location>
        <position position="61"/>
    </location>
    <ligand>
        <name>substrate</name>
    </ligand>
</feature>
<feature type="binding site" evidence="1">
    <location>
        <position position="61"/>
    </location>
    <ligand>
        <name>Zn(2+)</name>
        <dbReference type="ChEBI" id="CHEBI:29105"/>
    </ligand>
</feature>
<feature type="binding site" evidence="1">
    <location>
        <begin position="90"/>
        <end position="91"/>
    </location>
    <ligand>
        <name>substrate</name>
    </ligand>
</feature>
<feature type="binding site" evidence="1">
    <location>
        <begin position="116"/>
        <end position="118"/>
    </location>
    <ligand>
        <name>substrate</name>
    </ligand>
</feature>
<feature type="binding site" evidence="1">
    <location>
        <position position="121"/>
    </location>
    <ligand>
        <name>substrate</name>
    </ligand>
</feature>
<feature type="binding site" evidence="1">
    <location>
        <position position="168"/>
    </location>
    <ligand>
        <name>substrate</name>
    </ligand>
</feature>
<feature type="binding site" evidence="1">
    <location>
        <position position="168"/>
    </location>
    <ligand>
        <name>Zn(2+)</name>
        <dbReference type="ChEBI" id="CHEBI:29105"/>
    </ligand>
</feature>
<feature type="binding site" evidence="1">
    <location>
        <position position="176"/>
    </location>
    <ligand>
        <name>Zn(2+)</name>
        <dbReference type="ChEBI" id="CHEBI:29105"/>
    </ligand>
</feature>
<reference key="1">
    <citation type="journal article" date="2003" name="Proc. Natl. Acad. Sci. U.S.A.">
        <title>The complete genome sequence of the carcinogenic bacterium Helicobacter hepaticus.</title>
        <authorList>
            <person name="Suerbaum S."/>
            <person name="Josenhans C."/>
            <person name="Sterzenbach T."/>
            <person name="Drescher B."/>
            <person name="Brandt P."/>
            <person name="Bell M."/>
            <person name="Droege M."/>
            <person name="Fartmann B."/>
            <person name="Fischer H.-P."/>
            <person name="Ge Z."/>
            <person name="Hoerster A."/>
            <person name="Holland R."/>
            <person name="Klein K."/>
            <person name="Koenig J."/>
            <person name="Macko L."/>
            <person name="Mendz G.L."/>
            <person name="Nyakatura G."/>
            <person name="Schauer D.B."/>
            <person name="Shen Z."/>
            <person name="Weber J."/>
            <person name="Frosch M."/>
            <person name="Fox J.G."/>
        </authorList>
    </citation>
    <scope>NUCLEOTIDE SEQUENCE [LARGE SCALE GENOMIC DNA]</scope>
    <source>
        <strain>ATCC 51449 / 3B1</strain>
    </source>
</reference>
<dbReference type="EC" id="5.3.1.28" evidence="1"/>
<dbReference type="EMBL" id="AE017125">
    <property type="protein sequence ID" value="AAP78128.1"/>
    <property type="molecule type" value="Genomic_DNA"/>
</dbReference>
<dbReference type="RefSeq" id="WP_011116371.1">
    <property type="nucleotide sequence ID" value="NC_004917.1"/>
</dbReference>
<dbReference type="SMR" id="Q7VFZ4"/>
<dbReference type="STRING" id="235279.HH_1531"/>
<dbReference type="KEGG" id="hhe:HH_1531"/>
<dbReference type="eggNOG" id="COG0279">
    <property type="taxonomic scope" value="Bacteria"/>
</dbReference>
<dbReference type="HOGENOM" id="CLU_080999_4_0_7"/>
<dbReference type="OrthoDB" id="9810929at2"/>
<dbReference type="UniPathway" id="UPA00041">
    <property type="reaction ID" value="UER00436"/>
</dbReference>
<dbReference type="Proteomes" id="UP000002495">
    <property type="component" value="Chromosome"/>
</dbReference>
<dbReference type="GO" id="GO:0005737">
    <property type="term" value="C:cytoplasm"/>
    <property type="evidence" value="ECO:0007669"/>
    <property type="project" value="UniProtKB-SubCell"/>
</dbReference>
<dbReference type="GO" id="GO:0097367">
    <property type="term" value="F:carbohydrate derivative binding"/>
    <property type="evidence" value="ECO:0007669"/>
    <property type="project" value="InterPro"/>
</dbReference>
<dbReference type="GO" id="GO:0008968">
    <property type="term" value="F:D-sedoheptulose 7-phosphate isomerase activity"/>
    <property type="evidence" value="ECO:0007669"/>
    <property type="project" value="UniProtKB-UniRule"/>
</dbReference>
<dbReference type="GO" id="GO:0008270">
    <property type="term" value="F:zinc ion binding"/>
    <property type="evidence" value="ECO:0007669"/>
    <property type="project" value="UniProtKB-UniRule"/>
</dbReference>
<dbReference type="GO" id="GO:0005975">
    <property type="term" value="P:carbohydrate metabolic process"/>
    <property type="evidence" value="ECO:0007669"/>
    <property type="project" value="UniProtKB-UniRule"/>
</dbReference>
<dbReference type="GO" id="GO:2001061">
    <property type="term" value="P:D-glycero-D-manno-heptose 7-phosphate biosynthetic process"/>
    <property type="evidence" value="ECO:0007669"/>
    <property type="project" value="UniProtKB-UniPathway"/>
</dbReference>
<dbReference type="CDD" id="cd05006">
    <property type="entry name" value="SIS_GmhA"/>
    <property type="match status" value="1"/>
</dbReference>
<dbReference type="Gene3D" id="3.40.50.10490">
    <property type="entry name" value="Glucose-6-phosphate isomerase like protein, domain 1"/>
    <property type="match status" value="1"/>
</dbReference>
<dbReference type="HAMAP" id="MF_00067">
    <property type="entry name" value="GmhA"/>
    <property type="match status" value="1"/>
</dbReference>
<dbReference type="InterPro" id="IPR035461">
    <property type="entry name" value="GmhA/DiaA"/>
</dbReference>
<dbReference type="InterPro" id="IPR004515">
    <property type="entry name" value="Phosphoheptose_Isoase"/>
</dbReference>
<dbReference type="InterPro" id="IPR001347">
    <property type="entry name" value="SIS_dom"/>
</dbReference>
<dbReference type="InterPro" id="IPR046348">
    <property type="entry name" value="SIS_dom_sf"/>
</dbReference>
<dbReference type="InterPro" id="IPR050099">
    <property type="entry name" value="SIS_GmhA/DiaA_subfam"/>
</dbReference>
<dbReference type="NCBIfam" id="TIGR00441">
    <property type="entry name" value="gmhA"/>
    <property type="match status" value="1"/>
</dbReference>
<dbReference type="PANTHER" id="PTHR30390:SF6">
    <property type="entry name" value="DNAA INITIATOR-ASSOCIATING PROTEIN DIAA"/>
    <property type="match status" value="1"/>
</dbReference>
<dbReference type="PANTHER" id="PTHR30390">
    <property type="entry name" value="SEDOHEPTULOSE 7-PHOSPHATE ISOMERASE / DNAA INITIATOR-ASSOCIATING FACTOR FOR REPLICATION INITIATION"/>
    <property type="match status" value="1"/>
</dbReference>
<dbReference type="Pfam" id="PF13580">
    <property type="entry name" value="SIS_2"/>
    <property type="match status" value="1"/>
</dbReference>
<dbReference type="SUPFAM" id="SSF53697">
    <property type="entry name" value="SIS domain"/>
    <property type="match status" value="1"/>
</dbReference>
<dbReference type="PROSITE" id="PS51464">
    <property type="entry name" value="SIS"/>
    <property type="match status" value="1"/>
</dbReference>
<sequence>MQTLIESEFNAHLQSAQKIFTLTPAIQKAADILIQSLKNGGKILICGNGGSAADAQHFAAELTGRYKRERKGLAGIALSVDTSALTAIGNDYGFEYVFSRQVESLAQKGDVFFGISTSGNSHNVLKAAQIARDMDCFVIGLSGRDGGKLSALCDINLIMPDNDTPRIQELHILIIHILCDIIESECGENGNTNVIS</sequence>
<comment type="function">
    <text evidence="1">Catalyzes the isomerization of sedoheptulose 7-phosphate in D-glycero-D-manno-heptose 7-phosphate.</text>
</comment>
<comment type="catalytic activity">
    <reaction evidence="1">
        <text>2 D-sedoheptulose 7-phosphate = D-glycero-alpha-D-manno-heptose 7-phosphate + D-glycero-beta-D-manno-heptose 7-phosphate</text>
        <dbReference type="Rhea" id="RHEA:27489"/>
        <dbReference type="ChEBI" id="CHEBI:57483"/>
        <dbReference type="ChEBI" id="CHEBI:60203"/>
        <dbReference type="ChEBI" id="CHEBI:60204"/>
        <dbReference type="EC" id="5.3.1.28"/>
    </reaction>
</comment>
<comment type="cofactor">
    <cofactor evidence="1">
        <name>Zn(2+)</name>
        <dbReference type="ChEBI" id="CHEBI:29105"/>
    </cofactor>
    <text evidence="1">Binds 1 zinc ion per subunit.</text>
</comment>
<comment type="pathway">
    <text evidence="1">Carbohydrate biosynthesis; D-glycero-D-manno-heptose 7-phosphate biosynthesis; D-glycero-alpha-D-manno-heptose 7-phosphate and D-glycero-beta-D-manno-heptose 7-phosphate from sedoheptulose 7-phosphate: step 1/1.</text>
</comment>
<comment type="subunit">
    <text evidence="1">Homotetramer.</text>
</comment>
<comment type="subcellular location">
    <subcellularLocation>
        <location evidence="1">Cytoplasm</location>
    </subcellularLocation>
</comment>
<comment type="miscellaneous">
    <text evidence="1">The reaction produces a racemic mixture of D-glycero-alpha-D-manno-heptose 7-phosphate and D-glycero-beta-D-manno-heptose 7-phosphate.</text>
</comment>
<comment type="similarity">
    <text evidence="1">Belongs to the SIS family. GmhA subfamily.</text>
</comment>
<gene>
    <name evidence="1" type="primary">gmhA</name>
    <name type="ordered locus">HH_1531</name>
</gene>